<reference key="1">
    <citation type="submission" date="2006-08" db="EMBL/GenBank/DDBJ databases">
        <title>Complete sequence of chromosome 1 of Shewanella sp. MR-7.</title>
        <authorList>
            <person name="Copeland A."/>
            <person name="Lucas S."/>
            <person name="Lapidus A."/>
            <person name="Barry K."/>
            <person name="Detter J.C."/>
            <person name="Glavina del Rio T."/>
            <person name="Hammon N."/>
            <person name="Israni S."/>
            <person name="Dalin E."/>
            <person name="Tice H."/>
            <person name="Pitluck S."/>
            <person name="Kiss H."/>
            <person name="Brettin T."/>
            <person name="Bruce D."/>
            <person name="Han C."/>
            <person name="Tapia R."/>
            <person name="Gilna P."/>
            <person name="Schmutz J."/>
            <person name="Larimer F."/>
            <person name="Land M."/>
            <person name="Hauser L."/>
            <person name="Kyrpides N."/>
            <person name="Mikhailova N."/>
            <person name="Nealson K."/>
            <person name="Konstantinidis K."/>
            <person name="Klappenbach J."/>
            <person name="Tiedje J."/>
            <person name="Richardson P."/>
        </authorList>
    </citation>
    <scope>NUCLEOTIDE SEQUENCE [LARGE SCALE GENOMIC DNA]</scope>
    <source>
        <strain>MR-7</strain>
    </source>
</reference>
<comment type="function">
    <text evidence="1">Essential for recycling GMP and indirectly, cGMP.</text>
</comment>
<comment type="catalytic activity">
    <reaction evidence="1">
        <text>GMP + ATP = GDP + ADP</text>
        <dbReference type="Rhea" id="RHEA:20780"/>
        <dbReference type="ChEBI" id="CHEBI:30616"/>
        <dbReference type="ChEBI" id="CHEBI:58115"/>
        <dbReference type="ChEBI" id="CHEBI:58189"/>
        <dbReference type="ChEBI" id="CHEBI:456216"/>
        <dbReference type="EC" id="2.7.4.8"/>
    </reaction>
</comment>
<comment type="subcellular location">
    <subcellularLocation>
        <location evidence="1">Cytoplasm</location>
    </subcellularLocation>
</comment>
<comment type="similarity">
    <text evidence="1">Belongs to the guanylate kinase family.</text>
</comment>
<comment type="sequence caution" evidence="2">
    <conflict type="erroneous initiation">
        <sequence resource="EMBL-CDS" id="ABI41334"/>
    </conflict>
</comment>
<name>KGUA_SHESR</name>
<accession>Q0HZX1</accession>
<proteinExistence type="inferred from homology"/>
<protein>
    <recommendedName>
        <fullName evidence="1">Guanylate kinase</fullName>
        <ecNumber evidence="1">2.7.4.8</ecNumber>
    </recommendedName>
    <alternativeName>
        <fullName evidence="1">GMP kinase</fullName>
    </alternativeName>
</protein>
<dbReference type="EC" id="2.7.4.8" evidence="1"/>
<dbReference type="EMBL" id="CP000444">
    <property type="protein sequence ID" value="ABI41334.1"/>
    <property type="status" value="ALT_INIT"/>
    <property type="molecule type" value="Genomic_DNA"/>
</dbReference>
<dbReference type="SMR" id="Q0HZX1"/>
<dbReference type="KEGG" id="shm:Shewmr7_0330"/>
<dbReference type="HOGENOM" id="CLU_001715_1_2_6"/>
<dbReference type="GO" id="GO:0005829">
    <property type="term" value="C:cytosol"/>
    <property type="evidence" value="ECO:0007669"/>
    <property type="project" value="TreeGrafter"/>
</dbReference>
<dbReference type="GO" id="GO:0005524">
    <property type="term" value="F:ATP binding"/>
    <property type="evidence" value="ECO:0007669"/>
    <property type="project" value="UniProtKB-UniRule"/>
</dbReference>
<dbReference type="GO" id="GO:0004385">
    <property type="term" value="F:guanylate kinase activity"/>
    <property type="evidence" value="ECO:0007669"/>
    <property type="project" value="UniProtKB-UniRule"/>
</dbReference>
<dbReference type="CDD" id="cd00071">
    <property type="entry name" value="GMPK"/>
    <property type="match status" value="1"/>
</dbReference>
<dbReference type="FunFam" id="3.40.50.300:FF:000855">
    <property type="entry name" value="Guanylate kinase"/>
    <property type="match status" value="1"/>
</dbReference>
<dbReference type="FunFam" id="3.30.63.10:FF:000002">
    <property type="entry name" value="Guanylate kinase 1"/>
    <property type="match status" value="1"/>
</dbReference>
<dbReference type="Gene3D" id="3.30.63.10">
    <property type="entry name" value="Guanylate Kinase phosphate binding domain"/>
    <property type="match status" value="1"/>
</dbReference>
<dbReference type="Gene3D" id="3.40.50.300">
    <property type="entry name" value="P-loop containing nucleotide triphosphate hydrolases"/>
    <property type="match status" value="1"/>
</dbReference>
<dbReference type="HAMAP" id="MF_00328">
    <property type="entry name" value="Guanylate_kinase"/>
    <property type="match status" value="1"/>
</dbReference>
<dbReference type="InterPro" id="IPR008145">
    <property type="entry name" value="GK/Ca_channel_bsu"/>
</dbReference>
<dbReference type="InterPro" id="IPR008144">
    <property type="entry name" value="Guanylate_kin-like_dom"/>
</dbReference>
<dbReference type="InterPro" id="IPR017665">
    <property type="entry name" value="Guanylate_kinase"/>
</dbReference>
<dbReference type="InterPro" id="IPR020590">
    <property type="entry name" value="Guanylate_kinase_CS"/>
</dbReference>
<dbReference type="InterPro" id="IPR027417">
    <property type="entry name" value="P-loop_NTPase"/>
</dbReference>
<dbReference type="NCBIfam" id="TIGR03263">
    <property type="entry name" value="guanyl_kin"/>
    <property type="match status" value="1"/>
</dbReference>
<dbReference type="PANTHER" id="PTHR23117:SF13">
    <property type="entry name" value="GUANYLATE KINASE"/>
    <property type="match status" value="1"/>
</dbReference>
<dbReference type="PANTHER" id="PTHR23117">
    <property type="entry name" value="GUANYLATE KINASE-RELATED"/>
    <property type="match status" value="1"/>
</dbReference>
<dbReference type="Pfam" id="PF00625">
    <property type="entry name" value="Guanylate_kin"/>
    <property type="match status" value="1"/>
</dbReference>
<dbReference type="SMART" id="SM00072">
    <property type="entry name" value="GuKc"/>
    <property type="match status" value="1"/>
</dbReference>
<dbReference type="SUPFAM" id="SSF52540">
    <property type="entry name" value="P-loop containing nucleoside triphosphate hydrolases"/>
    <property type="match status" value="1"/>
</dbReference>
<dbReference type="PROSITE" id="PS00856">
    <property type="entry name" value="GUANYLATE_KINASE_1"/>
    <property type="match status" value="1"/>
</dbReference>
<dbReference type="PROSITE" id="PS50052">
    <property type="entry name" value="GUANYLATE_KINASE_2"/>
    <property type="match status" value="1"/>
</dbReference>
<evidence type="ECO:0000255" key="1">
    <source>
        <dbReference type="HAMAP-Rule" id="MF_00328"/>
    </source>
</evidence>
<evidence type="ECO:0000305" key="2"/>
<sequence>MTARGNLFIVSAPSGAGKSSLISALLKDKPADMQVSVSHTTRAPRPGEVNGQHYHFVNVEEFKALIEQNAFFEWAEVFGNYYGTSRHVIEHTLTQGIDVFLDIDWQGAQQVKAVMPEAIGVFILPPSRDELERRLTGRGQDSQEVIASRMAQAVSEMSHYKEYDFIIVNDDFDTALADLRAIIRSQRLTGASQIHAQNDMLNDLLAG</sequence>
<feature type="chain" id="PRO_0000266399" description="Guanylate kinase">
    <location>
        <begin position="1"/>
        <end position="207"/>
    </location>
</feature>
<feature type="domain" description="Guanylate kinase-like" evidence="1">
    <location>
        <begin position="5"/>
        <end position="184"/>
    </location>
</feature>
<feature type="binding site" evidence="1">
    <location>
        <begin position="12"/>
        <end position="19"/>
    </location>
    <ligand>
        <name>ATP</name>
        <dbReference type="ChEBI" id="CHEBI:30616"/>
    </ligand>
</feature>
<organism>
    <name type="scientific">Shewanella sp. (strain MR-7)</name>
    <dbReference type="NCBI Taxonomy" id="60481"/>
    <lineage>
        <taxon>Bacteria</taxon>
        <taxon>Pseudomonadati</taxon>
        <taxon>Pseudomonadota</taxon>
        <taxon>Gammaproteobacteria</taxon>
        <taxon>Alteromonadales</taxon>
        <taxon>Shewanellaceae</taxon>
        <taxon>Shewanella</taxon>
    </lineage>
</organism>
<gene>
    <name evidence="1" type="primary">gmk</name>
    <name type="ordered locus">Shewmr7_0330</name>
</gene>
<keyword id="KW-0067">ATP-binding</keyword>
<keyword id="KW-0963">Cytoplasm</keyword>
<keyword id="KW-0418">Kinase</keyword>
<keyword id="KW-0547">Nucleotide-binding</keyword>
<keyword id="KW-0808">Transferase</keyword>